<evidence type="ECO:0000255" key="1">
    <source>
        <dbReference type="PROSITE-ProRule" id="PRU01076"/>
    </source>
</evidence>
<evidence type="ECO:0000269" key="2">
    <source>
    </source>
</evidence>
<evidence type="ECO:0000305" key="3"/>
<protein>
    <recommendedName>
        <fullName>Antitoxin VapB1</fullName>
    </recommendedName>
</protein>
<proteinExistence type="evidence at protein level"/>
<comment type="function">
    <text evidence="2">Antitoxin component of a type II toxin-antitoxin (TA) system. Upon expression in E.coli neutralizes the effect of toxin VapC1. In vitro inhibits the RNase activity of VapC1.</text>
</comment>
<comment type="subunit">
    <text evidence="2">Forms multimers, as well forming as a complex with VapC1.</text>
</comment>
<comment type="induction">
    <text evidence="2">More highly expressed in early growth phase, expression decreases as cell density decreases. Part of the vapB1-vapC1 operon.</text>
</comment>
<comment type="similarity">
    <text evidence="3">Belongs to the VapB family.</text>
</comment>
<dbReference type="EMBL" id="CP002277">
    <property type="protein sequence ID" value="ADO80241.1"/>
    <property type="molecule type" value="Genomic_DNA"/>
</dbReference>
<dbReference type="RefSeq" id="WP_005649046.1">
    <property type="nucleotide sequence ID" value="NC_017451.1"/>
</dbReference>
<dbReference type="SMR" id="E4QWH3"/>
<dbReference type="KEGG" id="hiz:R2866_0252"/>
<dbReference type="PATRIC" id="fig|262728.6.peg.259"/>
<dbReference type="HOGENOM" id="CLU_162018_2_1_6"/>
<dbReference type="GO" id="GO:0003677">
    <property type="term" value="F:DNA binding"/>
    <property type="evidence" value="ECO:0007669"/>
    <property type="project" value="UniProtKB-KW"/>
</dbReference>
<dbReference type="Gene3D" id="2.10.260.10">
    <property type="match status" value="1"/>
</dbReference>
<dbReference type="InterPro" id="IPR007159">
    <property type="entry name" value="SpoVT-AbrB_dom"/>
</dbReference>
<dbReference type="InterPro" id="IPR037914">
    <property type="entry name" value="SpoVT-AbrB_sf"/>
</dbReference>
<dbReference type="InterPro" id="IPR051734">
    <property type="entry name" value="VapB_TA_antitoxins"/>
</dbReference>
<dbReference type="PANTHER" id="PTHR37550">
    <property type="entry name" value="ANTITOXIN VAPB1"/>
    <property type="match status" value="1"/>
</dbReference>
<dbReference type="PANTHER" id="PTHR37550:SF3">
    <property type="entry name" value="ANTITOXIN VAPB1"/>
    <property type="match status" value="1"/>
</dbReference>
<dbReference type="Pfam" id="PF04014">
    <property type="entry name" value="MazE_antitoxin"/>
    <property type="match status" value="1"/>
</dbReference>
<dbReference type="SMART" id="SM00966">
    <property type="entry name" value="SpoVT_AbrB"/>
    <property type="match status" value="1"/>
</dbReference>
<dbReference type="SUPFAM" id="SSF89447">
    <property type="entry name" value="AbrB/MazE/MraZ-like"/>
    <property type="match status" value="1"/>
</dbReference>
<dbReference type="PROSITE" id="PS51740">
    <property type="entry name" value="SPOVT_ABRB"/>
    <property type="match status" value="1"/>
</dbReference>
<sequence length="78" mass="9037">MLTKVFQSGNSQAVRIPMDFRFDVDTVEIFRKENGDVVLRPVSKKTDDFLALFEGFDETFIQALEARDDLPPQERENL</sequence>
<feature type="chain" id="PRO_0000408042" description="Antitoxin VapB1">
    <location>
        <begin position="1"/>
        <end position="78"/>
    </location>
</feature>
<feature type="domain" description="SpoVT-AbrB" evidence="1">
    <location>
        <begin position="3"/>
        <end position="44"/>
    </location>
</feature>
<reference key="1">
    <citation type="submission" date="2010-10" db="EMBL/GenBank/DDBJ databases">
        <title>Genome sequence of the invasive non-typeable isolate Haemophilus influenzae R2866.</title>
        <authorList>
            <person name="VanWagoner T.M."/>
            <person name="Erwin A.L."/>
            <person name="Kaul R."/>
            <person name="Mahaffey M."/>
            <person name="Zhou Y."/>
            <person name="Aggarwal G."/>
            <person name="Chang J."/>
            <person name="Deng H."/>
            <person name="Gillett W."/>
            <person name="Haugen E."/>
            <person name="Kibukawa M."/>
            <person name="Phelps K."/>
            <person name="Saenphimmachak C."/>
            <person name="Sivam D."/>
            <person name="Worthey E.A."/>
            <person name="Olson M.V."/>
            <person name="Stull T.L."/>
            <person name="Smith A.L."/>
        </authorList>
    </citation>
    <scope>NUCLEOTIDE SEQUENCE [LARGE SCALE GENOMIC DNA]</scope>
    <source>
        <strain>R2866</strain>
    </source>
</reference>
<reference key="2">
    <citation type="journal article" date="2007" name="J. Bacteriol.">
        <title>VapC-1 of nontypeable Haemophilus influenzae is a ribonuclease.</title>
        <authorList>
            <person name="Daines D.A."/>
            <person name="Wu M.H."/>
            <person name="Yuan S.Y."/>
        </authorList>
    </citation>
    <scope>EXPRESSION IN E.COLI</scope>
    <scope>FUNCTION AS AN ANTITOXIN</scope>
    <scope>SUBUNIT</scope>
    <scope>INDUCTION</scope>
    <scope>OPERON STRUCTURE</scope>
    <source>
        <strain>R2866</strain>
    </source>
</reference>
<keyword id="KW-0238">DNA-binding</keyword>
<keyword id="KW-1277">Toxin-antitoxin system</keyword>
<accession>E4QWH3</accession>
<gene>
    <name type="primary">vapB1</name>
    <name type="ordered locus">R2866_0252</name>
</gene>
<name>VAPB1_HAEI6</name>
<organism>
    <name type="scientific">Haemophilus influenzae (strain R2866)</name>
    <dbReference type="NCBI Taxonomy" id="262728"/>
    <lineage>
        <taxon>Bacteria</taxon>
        <taxon>Pseudomonadati</taxon>
        <taxon>Pseudomonadota</taxon>
        <taxon>Gammaproteobacteria</taxon>
        <taxon>Pasteurellales</taxon>
        <taxon>Pasteurellaceae</taxon>
        <taxon>Haemophilus</taxon>
    </lineage>
</organism>